<gene>
    <name type="ordered locus">TP_0928</name>
</gene>
<sequence length="246" mass="27471">MKSFYFGRGALASTGGCVVLAVAALMFVFLPALSGGGHGHVRLGSWGGVALTNAPDSLFSQQYSALAQTAERYNLYPKDAQEREGMDRRVLRAAFRAAVVQLAGTEQTKQSGFTLSEELLDREVLSFYADADGTYSPQRYQGTPEHVRLSQRKKMRDSLLSDQYLYHLFGKETGRGGLKLNSRELRFVQDMAKKERSFRYVVLGEERFPAERVSRTGKSMPTFLPCITFPCSPTPRKRTRAARHAL</sequence>
<evidence type="ECO:0000255" key="1"/>
<evidence type="ECO:0000305" key="2"/>
<name>Y928_TREPA</name>
<accession>O83898</accession>
<proteinExistence type="predicted"/>
<feature type="chain" id="PRO_0000202354" description="Uncharacterized protein TP_0928">
    <location>
        <begin position="1"/>
        <end position="246"/>
    </location>
</feature>
<feature type="transmembrane region" description="Helical" evidence="1">
    <location>
        <begin position="7"/>
        <end position="29"/>
    </location>
</feature>
<comment type="subcellular location">
    <subcellularLocation>
        <location evidence="2">Membrane</location>
        <topology evidence="2">Single-pass membrane protein</topology>
    </subcellularLocation>
</comment>
<keyword id="KW-0472">Membrane</keyword>
<keyword id="KW-1185">Reference proteome</keyword>
<keyword id="KW-0812">Transmembrane</keyword>
<keyword id="KW-1133">Transmembrane helix</keyword>
<reference key="1">
    <citation type="journal article" date="1998" name="Science">
        <title>Complete genome sequence of Treponema pallidum, the syphilis spirochete.</title>
        <authorList>
            <person name="Fraser C.M."/>
            <person name="Norris S.J."/>
            <person name="Weinstock G.M."/>
            <person name="White O."/>
            <person name="Sutton G.G."/>
            <person name="Dodson R.J."/>
            <person name="Gwinn M.L."/>
            <person name="Hickey E.K."/>
            <person name="Clayton R.A."/>
            <person name="Ketchum K.A."/>
            <person name="Sodergren E."/>
            <person name="Hardham J.M."/>
            <person name="McLeod M.P."/>
            <person name="Salzberg S.L."/>
            <person name="Peterson J.D."/>
            <person name="Khalak H.G."/>
            <person name="Richardson D.L."/>
            <person name="Howell J.K."/>
            <person name="Chidambaram M."/>
            <person name="Utterback T.R."/>
            <person name="McDonald L.A."/>
            <person name="Artiach P."/>
            <person name="Bowman C."/>
            <person name="Cotton M.D."/>
            <person name="Fujii C."/>
            <person name="Garland S.A."/>
            <person name="Hatch B."/>
            <person name="Horst K."/>
            <person name="Roberts K.M."/>
            <person name="Sandusky M."/>
            <person name="Weidman J.F."/>
            <person name="Smith H.O."/>
            <person name="Venter J.C."/>
        </authorList>
    </citation>
    <scope>NUCLEOTIDE SEQUENCE [LARGE SCALE GENOMIC DNA]</scope>
    <source>
        <strain>Nichols</strain>
    </source>
</reference>
<protein>
    <recommendedName>
        <fullName>Uncharacterized protein TP_0928</fullName>
    </recommendedName>
</protein>
<organism>
    <name type="scientific">Treponema pallidum (strain Nichols)</name>
    <dbReference type="NCBI Taxonomy" id="243276"/>
    <lineage>
        <taxon>Bacteria</taxon>
        <taxon>Pseudomonadati</taxon>
        <taxon>Spirochaetota</taxon>
        <taxon>Spirochaetia</taxon>
        <taxon>Spirochaetales</taxon>
        <taxon>Treponemataceae</taxon>
        <taxon>Treponema</taxon>
    </lineage>
</organism>
<dbReference type="EMBL" id="AE000520">
    <property type="protein sequence ID" value="AAC65887.1"/>
    <property type="molecule type" value="Genomic_DNA"/>
</dbReference>
<dbReference type="PIR" id="A71264">
    <property type="entry name" value="A71264"/>
</dbReference>
<dbReference type="RefSeq" id="WP_010882371.1">
    <property type="nucleotide sequence ID" value="NC_000919.1"/>
</dbReference>
<dbReference type="IntAct" id="O83898">
    <property type="interactions" value="4"/>
</dbReference>
<dbReference type="STRING" id="243276.TP_0928"/>
<dbReference type="EnsemblBacteria" id="AAC65887">
    <property type="protein sequence ID" value="AAC65887"/>
    <property type="gene ID" value="TP_0928"/>
</dbReference>
<dbReference type="KEGG" id="tpa:TP_0928"/>
<dbReference type="HOGENOM" id="CLU_1128659_0_0_12"/>
<dbReference type="OrthoDB" id="362685at2"/>
<dbReference type="Proteomes" id="UP000000811">
    <property type="component" value="Chromosome"/>
</dbReference>
<dbReference type="GO" id="GO:0016020">
    <property type="term" value="C:membrane"/>
    <property type="evidence" value="ECO:0007669"/>
    <property type="project" value="UniProtKB-SubCell"/>
</dbReference>